<sequence>MAETSLLEAGASAASTAAALENLQVEASCSVCLEYLKEPVIIECGHNFCKACITRWWEDLERDFPCPVCRKTSRYRSLRPNRQLGSMVEIAKQLQAVKRKIRDESLCPQHHEALSLFCYEDQEAVCLICAISHTHRAHTVVPLDDATQEYKEKLQKCLEPLEQKLQEITRCKSSEEKKPGELKRLVESRRQQILREFEELHRRLDEEQQVLLSRLEEEEQDILQRLRENAAHLGDKRRDLAHLAAEVEGKCLQSGFEMLKDVKSTLEKNIPRKFGGSLSRICPRDHKALLGLVKEINRCEKVKTMEVTSVSIELEKNFSNFPRQYFALRKILKQLIADVTLDPETAHPNLVLSEDRKSVKFVETRLRDLPDTPRRFTFYPCVLATEGFTSGRHYWEVEVGDKTHWAVGVCRDSVSRKGELTPLPETGYWRVRLWNGDKYAATTTPFTPLHIKVKPKRVGIFLDYEAGTLSFYNVTDRSHIYTFTDTFTEKLWPLFYPGIRAGRKNAAPLTIRPPTDWE</sequence>
<feature type="chain" id="PRO_0000249811" description="E3 ubiquitin-protein ligase TRIM39">
    <location>
        <begin position="1"/>
        <end position="518"/>
    </location>
</feature>
<feature type="domain" description="B30.2/SPRY" evidence="5">
    <location>
        <begin position="319"/>
        <end position="514"/>
    </location>
</feature>
<feature type="zinc finger region" description="RING-type" evidence="4">
    <location>
        <begin position="29"/>
        <end position="70"/>
    </location>
</feature>
<feature type="zinc finger region" description="B box-type" evidence="3">
    <location>
        <begin position="102"/>
        <end position="143"/>
    </location>
</feature>
<feature type="region of interest" description="Interaction with CDKN1A" evidence="1">
    <location>
        <begin position="268"/>
        <end position="337"/>
    </location>
</feature>
<feature type="region of interest" description="Interaction with CDKN1A" evidence="1">
    <location>
        <begin position="389"/>
        <end position="518"/>
    </location>
</feature>
<feature type="coiled-coil region" evidence="2">
    <location>
        <begin position="181"/>
        <end position="250"/>
    </location>
</feature>
<feature type="binding site" evidence="3">
    <location>
        <position position="107"/>
    </location>
    <ligand>
        <name>Zn(2+)</name>
        <dbReference type="ChEBI" id="CHEBI:29105"/>
    </ligand>
</feature>
<feature type="binding site" evidence="3">
    <location>
        <position position="110"/>
    </location>
    <ligand>
        <name>Zn(2+)</name>
        <dbReference type="ChEBI" id="CHEBI:29105"/>
    </ligand>
</feature>
<feature type="binding site" evidence="3">
    <location>
        <position position="129"/>
    </location>
    <ligand>
        <name>Zn(2+)</name>
        <dbReference type="ChEBI" id="CHEBI:29105"/>
    </ligand>
</feature>
<feature type="binding site" evidence="3">
    <location>
        <position position="135"/>
    </location>
    <ligand>
        <name>Zn(2+)</name>
        <dbReference type="ChEBI" id="CHEBI:29105"/>
    </ligand>
</feature>
<dbReference type="EC" id="2.3.2.27"/>
<dbReference type="EMBL" id="AB210207">
    <property type="protein sequence ID" value="BAE92829.1"/>
    <property type="molecule type" value="Genomic_DNA"/>
</dbReference>
<dbReference type="EMBL" id="AB210208">
    <property type="protein sequence ID" value="BAE92830.1"/>
    <property type="molecule type" value="Genomic_DNA"/>
</dbReference>
<dbReference type="RefSeq" id="NP_001065263.1">
    <property type="nucleotide sequence ID" value="NM_001071795.1"/>
</dbReference>
<dbReference type="RefSeq" id="XP_009449087.1">
    <property type="nucleotide sequence ID" value="XM_009450812.2"/>
</dbReference>
<dbReference type="RefSeq" id="XP_009449088.1">
    <property type="nucleotide sequence ID" value="XM_009450813.2"/>
</dbReference>
<dbReference type="RefSeq" id="XP_016810124.1">
    <property type="nucleotide sequence ID" value="XM_016954635.1"/>
</dbReference>
<dbReference type="RefSeq" id="XP_016810125.1">
    <property type="nucleotide sequence ID" value="XM_016954636.1"/>
</dbReference>
<dbReference type="RefSeq" id="XP_016810126.1">
    <property type="nucleotide sequence ID" value="XM_016954637.1"/>
</dbReference>
<dbReference type="RefSeq" id="XP_016810127.1">
    <property type="nucleotide sequence ID" value="XM_016954638.1"/>
</dbReference>
<dbReference type="RefSeq" id="XP_016810128.1">
    <property type="nucleotide sequence ID" value="XM_016954639.1"/>
</dbReference>
<dbReference type="RefSeq" id="XP_016810129.1">
    <property type="nucleotide sequence ID" value="XM_016954640.1"/>
</dbReference>
<dbReference type="RefSeq" id="XP_016810130.1">
    <property type="nucleotide sequence ID" value="XM_016954641.1"/>
</dbReference>
<dbReference type="BMRB" id="Q1XHU0"/>
<dbReference type="SMR" id="Q1XHU0"/>
<dbReference type="FunCoup" id="Q1XHU0">
    <property type="interactions" value="2418"/>
</dbReference>
<dbReference type="STRING" id="9598.ENSPTRP00000050429"/>
<dbReference type="PaxDb" id="9598-ENSPTRP00000050429"/>
<dbReference type="Ensembl" id="ENSPTRT00000057537.4">
    <property type="protein sequence ID" value="ENSPTRP00000050429.3"/>
    <property type="gene ID" value="ENSPTRG00000017923.7"/>
</dbReference>
<dbReference type="GeneID" id="462537"/>
<dbReference type="KEGG" id="ptr:462537"/>
<dbReference type="CTD" id="56658"/>
<dbReference type="VGNC" id="VGNC:53445">
    <property type="gene designation" value="TRIM39"/>
</dbReference>
<dbReference type="eggNOG" id="KOG2177">
    <property type="taxonomic scope" value="Eukaryota"/>
</dbReference>
<dbReference type="GeneTree" id="ENSGT00940000154126"/>
<dbReference type="HOGENOM" id="CLU_013137_0_3_1"/>
<dbReference type="InParanoid" id="Q1XHU0"/>
<dbReference type="OMA" id="QDITRCK"/>
<dbReference type="OrthoDB" id="2827at9604"/>
<dbReference type="TreeFam" id="TF342569"/>
<dbReference type="UniPathway" id="UPA00143"/>
<dbReference type="Proteomes" id="UP000002277">
    <property type="component" value="Chromosome 6"/>
</dbReference>
<dbReference type="Bgee" id="ENSPTRG00000017923">
    <property type="expression patterns" value="Expressed in testis and 21 other cell types or tissues"/>
</dbReference>
<dbReference type="GO" id="GO:0005737">
    <property type="term" value="C:cytoplasm"/>
    <property type="evidence" value="ECO:0000318"/>
    <property type="project" value="GO_Central"/>
</dbReference>
<dbReference type="GO" id="GO:0005829">
    <property type="term" value="C:cytosol"/>
    <property type="evidence" value="ECO:0000318"/>
    <property type="project" value="GO_Central"/>
</dbReference>
<dbReference type="GO" id="GO:0005739">
    <property type="term" value="C:mitochondrion"/>
    <property type="evidence" value="ECO:0007669"/>
    <property type="project" value="UniProtKB-SubCell"/>
</dbReference>
<dbReference type="GO" id="GO:0005634">
    <property type="term" value="C:nucleus"/>
    <property type="evidence" value="ECO:0000250"/>
    <property type="project" value="UniProtKB"/>
</dbReference>
<dbReference type="GO" id="GO:0042802">
    <property type="term" value="F:identical protein binding"/>
    <property type="evidence" value="ECO:0007669"/>
    <property type="project" value="Ensembl"/>
</dbReference>
<dbReference type="GO" id="GO:0061630">
    <property type="term" value="F:ubiquitin protein ligase activity"/>
    <property type="evidence" value="ECO:0000318"/>
    <property type="project" value="GO_Central"/>
</dbReference>
<dbReference type="GO" id="GO:0008270">
    <property type="term" value="F:zinc ion binding"/>
    <property type="evidence" value="ECO:0007669"/>
    <property type="project" value="UniProtKB-KW"/>
</dbReference>
<dbReference type="GO" id="GO:0006915">
    <property type="term" value="P:apoptotic process"/>
    <property type="evidence" value="ECO:0007669"/>
    <property type="project" value="UniProtKB-KW"/>
</dbReference>
<dbReference type="GO" id="GO:0045087">
    <property type="term" value="P:innate immune response"/>
    <property type="evidence" value="ECO:0000318"/>
    <property type="project" value="GO_Central"/>
</dbReference>
<dbReference type="GO" id="GO:0007095">
    <property type="term" value="P:mitotic G2 DNA damage checkpoint signaling"/>
    <property type="evidence" value="ECO:0000250"/>
    <property type="project" value="UniProtKB"/>
</dbReference>
<dbReference type="GO" id="GO:0043124">
    <property type="term" value="P:negative regulation of canonical NF-kappaB signal transduction"/>
    <property type="evidence" value="ECO:0000250"/>
    <property type="project" value="UniProtKB"/>
</dbReference>
<dbReference type="GO" id="GO:0032435">
    <property type="term" value="P:negative regulation of proteasomal ubiquitin-dependent protein catabolic process"/>
    <property type="evidence" value="ECO:0000250"/>
    <property type="project" value="UniProtKB"/>
</dbReference>
<dbReference type="GO" id="GO:2001235">
    <property type="term" value="P:positive regulation of apoptotic signaling pathway"/>
    <property type="evidence" value="ECO:0000318"/>
    <property type="project" value="GO_Central"/>
</dbReference>
<dbReference type="GO" id="GO:0050821">
    <property type="term" value="P:protein stabilization"/>
    <property type="evidence" value="ECO:0000250"/>
    <property type="project" value="UniProtKB"/>
</dbReference>
<dbReference type="GO" id="GO:0016567">
    <property type="term" value="P:protein ubiquitination"/>
    <property type="evidence" value="ECO:0007669"/>
    <property type="project" value="UniProtKB-UniPathway"/>
</dbReference>
<dbReference type="GO" id="GO:1902806">
    <property type="term" value="P:regulation of cell cycle G1/S phase transition"/>
    <property type="evidence" value="ECO:0000250"/>
    <property type="project" value="UniProtKB"/>
</dbReference>
<dbReference type="GO" id="GO:0010468">
    <property type="term" value="P:regulation of gene expression"/>
    <property type="evidence" value="ECO:0000318"/>
    <property type="project" value="GO_Central"/>
</dbReference>
<dbReference type="CDD" id="cd19780">
    <property type="entry name" value="Bbox2_TRIM39-like"/>
    <property type="match status" value="1"/>
</dbReference>
<dbReference type="CDD" id="cd16594">
    <property type="entry name" value="RING-HC_TRIM7-like_C-IV"/>
    <property type="match status" value="1"/>
</dbReference>
<dbReference type="CDD" id="cd13745">
    <property type="entry name" value="SPRY_PRY_TRIM39"/>
    <property type="match status" value="1"/>
</dbReference>
<dbReference type="FunFam" id="3.30.160.60:FF:004978">
    <property type="match status" value="1"/>
</dbReference>
<dbReference type="FunFam" id="2.60.120.920:FF:000004">
    <property type="entry name" value="Butyrophilin subfamily 1 member A1"/>
    <property type="match status" value="1"/>
</dbReference>
<dbReference type="FunFam" id="3.30.40.10:FF:000171">
    <property type="entry name" value="E3 ubiquitin-protein ligase TRIM39"/>
    <property type="match status" value="1"/>
</dbReference>
<dbReference type="Gene3D" id="2.60.120.920">
    <property type="match status" value="1"/>
</dbReference>
<dbReference type="Gene3D" id="3.30.160.60">
    <property type="entry name" value="Classic Zinc Finger"/>
    <property type="match status" value="1"/>
</dbReference>
<dbReference type="Gene3D" id="3.30.40.10">
    <property type="entry name" value="Zinc/RING finger domain, C3HC4 (zinc finger)"/>
    <property type="match status" value="1"/>
</dbReference>
<dbReference type="InterPro" id="IPR001870">
    <property type="entry name" value="B30.2/SPRY"/>
</dbReference>
<dbReference type="InterPro" id="IPR043136">
    <property type="entry name" value="B30.2/SPRY_sf"/>
</dbReference>
<dbReference type="InterPro" id="IPR003879">
    <property type="entry name" value="Butyrophylin_SPRY"/>
</dbReference>
<dbReference type="InterPro" id="IPR013320">
    <property type="entry name" value="ConA-like_dom_sf"/>
</dbReference>
<dbReference type="InterPro" id="IPR006574">
    <property type="entry name" value="PRY"/>
</dbReference>
<dbReference type="InterPro" id="IPR035033">
    <property type="entry name" value="PRY/SPRY_TRIM39"/>
</dbReference>
<dbReference type="InterPro" id="IPR003877">
    <property type="entry name" value="SPRY_dom"/>
</dbReference>
<dbReference type="InterPro" id="IPR050143">
    <property type="entry name" value="TRIM/RBCC"/>
</dbReference>
<dbReference type="InterPro" id="IPR000315">
    <property type="entry name" value="Znf_B-box"/>
</dbReference>
<dbReference type="InterPro" id="IPR001841">
    <property type="entry name" value="Znf_RING"/>
</dbReference>
<dbReference type="InterPro" id="IPR013083">
    <property type="entry name" value="Znf_RING/FYVE/PHD"/>
</dbReference>
<dbReference type="InterPro" id="IPR017907">
    <property type="entry name" value="Znf_RING_CS"/>
</dbReference>
<dbReference type="PANTHER" id="PTHR24103">
    <property type="entry name" value="E3 UBIQUITIN-PROTEIN LIGASE TRIM"/>
    <property type="match status" value="1"/>
</dbReference>
<dbReference type="Pfam" id="PF13765">
    <property type="entry name" value="PRY"/>
    <property type="match status" value="1"/>
</dbReference>
<dbReference type="Pfam" id="PF00622">
    <property type="entry name" value="SPRY"/>
    <property type="match status" value="1"/>
</dbReference>
<dbReference type="Pfam" id="PF00643">
    <property type="entry name" value="zf-B_box"/>
    <property type="match status" value="1"/>
</dbReference>
<dbReference type="Pfam" id="PF15227">
    <property type="entry name" value="zf-C3HC4_4"/>
    <property type="match status" value="1"/>
</dbReference>
<dbReference type="PRINTS" id="PR01407">
    <property type="entry name" value="BUTYPHLNCDUF"/>
</dbReference>
<dbReference type="SMART" id="SM00336">
    <property type="entry name" value="BBOX"/>
    <property type="match status" value="1"/>
</dbReference>
<dbReference type="SMART" id="SM00589">
    <property type="entry name" value="PRY"/>
    <property type="match status" value="1"/>
</dbReference>
<dbReference type="SMART" id="SM00184">
    <property type="entry name" value="RING"/>
    <property type="match status" value="1"/>
</dbReference>
<dbReference type="SMART" id="SM00449">
    <property type="entry name" value="SPRY"/>
    <property type="match status" value="1"/>
</dbReference>
<dbReference type="SUPFAM" id="SSF57845">
    <property type="entry name" value="B-box zinc-binding domain"/>
    <property type="match status" value="1"/>
</dbReference>
<dbReference type="SUPFAM" id="SSF49899">
    <property type="entry name" value="Concanavalin A-like lectins/glucanases"/>
    <property type="match status" value="1"/>
</dbReference>
<dbReference type="SUPFAM" id="SSF57850">
    <property type="entry name" value="RING/U-box"/>
    <property type="match status" value="1"/>
</dbReference>
<dbReference type="PROSITE" id="PS50188">
    <property type="entry name" value="B302_SPRY"/>
    <property type="match status" value="1"/>
</dbReference>
<dbReference type="PROSITE" id="PS50119">
    <property type="entry name" value="ZF_BBOX"/>
    <property type="match status" value="1"/>
</dbReference>
<dbReference type="PROSITE" id="PS00518">
    <property type="entry name" value="ZF_RING_1"/>
    <property type="match status" value="1"/>
</dbReference>
<dbReference type="PROSITE" id="PS50089">
    <property type="entry name" value="ZF_RING_2"/>
    <property type="match status" value="1"/>
</dbReference>
<reference key="1">
    <citation type="journal article" date="2006" name="Genetics">
        <title>Rapid evolution of major histocompatibility complex class I genes in primates generates new disease alleles in humans via hitchhiking diversity.</title>
        <authorList>
            <person name="Shiina T."/>
            <person name="Ota M."/>
            <person name="Shimizu S."/>
            <person name="Katsuyama Y."/>
            <person name="Hashimoto N."/>
            <person name="Takasu M."/>
            <person name="Anzai T."/>
            <person name="Kulski J.K."/>
            <person name="Kikkawa E."/>
            <person name="Naruse T."/>
            <person name="Kimura N."/>
            <person name="Yanagiya K."/>
            <person name="Watanabe A."/>
            <person name="Hosomichi K."/>
            <person name="Kohara S."/>
            <person name="Iwamoto C."/>
            <person name="Umehara Y."/>
            <person name="Meyer A."/>
            <person name="Wanner V."/>
            <person name="Sano K."/>
            <person name="Macquin C."/>
            <person name="Ikeo K."/>
            <person name="Tokunaga K."/>
            <person name="Gojobori T."/>
            <person name="Inoko H."/>
            <person name="Bahram S."/>
        </authorList>
    </citation>
    <scope>NUCLEOTIDE SEQUENCE [LARGE SCALE GENOMIC DNA]</scope>
</reference>
<accession>Q1XHU0</accession>
<accession>Q1XHU1</accession>
<gene>
    <name type="primary">TRIM39</name>
</gene>
<organism>
    <name type="scientific">Pan troglodytes</name>
    <name type="common">Chimpanzee</name>
    <dbReference type="NCBI Taxonomy" id="9598"/>
    <lineage>
        <taxon>Eukaryota</taxon>
        <taxon>Metazoa</taxon>
        <taxon>Chordata</taxon>
        <taxon>Craniata</taxon>
        <taxon>Vertebrata</taxon>
        <taxon>Euteleostomi</taxon>
        <taxon>Mammalia</taxon>
        <taxon>Eutheria</taxon>
        <taxon>Euarchontoglires</taxon>
        <taxon>Primates</taxon>
        <taxon>Haplorrhini</taxon>
        <taxon>Catarrhini</taxon>
        <taxon>Hominidae</taxon>
        <taxon>Pan</taxon>
    </lineage>
</organism>
<proteinExistence type="inferred from homology"/>
<comment type="function">
    <text evidence="1">E3 ubiquitin-protein ligase (By similarity). May facilitate apoptosis by inhibiting APC/C-Cdh1-mediated poly-ubiquitination and subsequent proteasome-mediated degradation of the pro-apoptotic protein MOAP1 (By similarity). Regulates the G1/S transition of the cell cycle and DNA damage-induced G2 arrest by stabilizing CDKN1A/p21 (By similarity). Positively regulates CDKN1A/p21 stability by competing with DTL for CDKN1A/p21 binding, therefore disrupting DCX(DTL) E3 ubiquitin ligase complex-mediated CDKN1A/p21 ubiquitination and degradation (By similarity).</text>
</comment>
<comment type="catalytic activity">
    <reaction>
        <text>S-ubiquitinyl-[E2 ubiquitin-conjugating enzyme]-L-cysteine + [acceptor protein]-L-lysine = [E2 ubiquitin-conjugating enzyme]-L-cysteine + N(6)-ubiquitinyl-[acceptor protein]-L-lysine.</text>
        <dbReference type="EC" id="2.3.2.27"/>
    </reaction>
</comment>
<comment type="pathway">
    <text>Protein modification; protein ubiquitination.</text>
</comment>
<comment type="subunit">
    <text evidence="1">Interacts with MOAP1 (By similarity). Interacts with CDKN1A (By similarity).</text>
</comment>
<comment type="subcellular location">
    <subcellularLocation>
        <location evidence="1">Cytoplasm</location>
        <location evidence="1">Cytosol</location>
    </subcellularLocation>
    <subcellularLocation>
        <location evidence="1">Mitochondrion</location>
    </subcellularLocation>
    <subcellularLocation>
        <location evidence="1">Nucleus</location>
    </subcellularLocation>
    <text evidence="1">Found predominantly in the cytosol. Partial shift from the cytosol to the mitochondria when colocalized with MOAP1. Colocalizes with CDKN1A in the nucleus.</text>
</comment>
<comment type="PTM">
    <text evidence="1">Autoubiquitinated.</text>
</comment>
<comment type="similarity">
    <text evidence="6">Belongs to the TRIM/RBCC family.</text>
</comment>
<keyword id="KW-0053">Apoptosis</keyword>
<keyword id="KW-0175">Coiled coil</keyword>
<keyword id="KW-0963">Cytoplasm</keyword>
<keyword id="KW-0479">Metal-binding</keyword>
<keyword id="KW-0496">Mitochondrion</keyword>
<keyword id="KW-0539">Nucleus</keyword>
<keyword id="KW-1185">Reference proteome</keyword>
<keyword id="KW-0808">Transferase</keyword>
<keyword id="KW-0832">Ubl conjugation</keyword>
<keyword id="KW-0833">Ubl conjugation pathway</keyword>
<keyword id="KW-0862">Zinc</keyword>
<keyword id="KW-0863">Zinc-finger</keyword>
<name>TRI39_PANTR</name>
<protein>
    <recommendedName>
        <fullName>E3 ubiquitin-protein ligase TRIM39</fullName>
        <ecNumber>2.3.2.27</ecNumber>
    </recommendedName>
    <alternativeName>
        <fullName evidence="6">RING-type E3 ubiquitin transferase TRIM39</fullName>
    </alternativeName>
    <alternativeName>
        <fullName>Tripartite motif-containing protein 39</fullName>
    </alternativeName>
</protein>
<evidence type="ECO:0000250" key="1">
    <source>
        <dbReference type="UniProtKB" id="Q9HCM9"/>
    </source>
</evidence>
<evidence type="ECO:0000255" key="2"/>
<evidence type="ECO:0000255" key="3">
    <source>
        <dbReference type="PROSITE-ProRule" id="PRU00024"/>
    </source>
</evidence>
<evidence type="ECO:0000255" key="4">
    <source>
        <dbReference type="PROSITE-ProRule" id="PRU00175"/>
    </source>
</evidence>
<evidence type="ECO:0000255" key="5">
    <source>
        <dbReference type="PROSITE-ProRule" id="PRU00548"/>
    </source>
</evidence>
<evidence type="ECO:0000305" key="6"/>